<accession>A6U1Q5</accession>
<dbReference type="EMBL" id="CP000736">
    <property type="protein sequence ID" value="ABR52373.1"/>
    <property type="molecule type" value="Genomic_DNA"/>
</dbReference>
<dbReference type="SMR" id="A6U1Q5"/>
<dbReference type="KEGG" id="sah:SaurJH1_1524"/>
<dbReference type="HOGENOM" id="CLU_222673_0_0_9"/>
<dbReference type="GO" id="GO:0005886">
    <property type="term" value="C:plasma membrane"/>
    <property type="evidence" value="ECO:0007669"/>
    <property type="project" value="UniProtKB-SubCell"/>
</dbReference>
<dbReference type="Gene3D" id="3.10.20.890">
    <property type="match status" value="1"/>
</dbReference>
<dbReference type="Gene3D" id="1.20.120.1850">
    <property type="entry name" value="Ebh helix bundles repeating unit (S and A modules)"/>
    <property type="match status" value="8"/>
</dbReference>
<dbReference type="Gene3D" id="1.20.5.420">
    <property type="entry name" value="Immunoglobulin FC, subunit C"/>
    <property type="match status" value="90"/>
</dbReference>
<dbReference type="InterPro" id="IPR011439">
    <property type="entry name" value="DUF1542"/>
</dbReference>
<dbReference type="InterPro" id="IPR026361">
    <property type="entry name" value="Ebh_dom"/>
</dbReference>
<dbReference type="InterPro" id="IPR051197">
    <property type="entry name" value="ECM-binding_protein"/>
</dbReference>
<dbReference type="InterPro" id="IPR020840">
    <property type="entry name" value="Extracell_matrix-bd_GA"/>
</dbReference>
<dbReference type="InterPro" id="IPR002988">
    <property type="entry name" value="GA_module"/>
</dbReference>
<dbReference type="InterPro" id="IPR009063">
    <property type="entry name" value="Ig/albumin-bd_sf"/>
</dbReference>
<dbReference type="InterPro" id="IPR005877">
    <property type="entry name" value="YSIRK_signal_dom"/>
</dbReference>
<dbReference type="NCBIfam" id="TIGR04264">
    <property type="entry name" value="hyperosmo_Ebh"/>
    <property type="match status" value="1"/>
</dbReference>
<dbReference type="NCBIfam" id="TIGR01168">
    <property type="entry name" value="YSIRK_signal"/>
    <property type="match status" value="1"/>
</dbReference>
<dbReference type="PANTHER" id="PTHR33150">
    <property type="entry name" value="EXTRACELLULAR MATRIX-BINDING PROTEIN EBH"/>
    <property type="match status" value="1"/>
</dbReference>
<dbReference type="PANTHER" id="PTHR33150:SF1">
    <property type="entry name" value="EXTRACELLULAR MATRIX-BINDING PROTEIN EBH"/>
    <property type="match status" value="1"/>
</dbReference>
<dbReference type="Pfam" id="PF07564">
    <property type="entry name" value="DUF1542"/>
    <property type="match status" value="8"/>
</dbReference>
<dbReference type="Pfam" id="PF07554">
    <property type="entry name" value="FIVAR"/>
    <property type="match status" value="52"/>
</dbReference>
<dbReference type="Pfam" id="PF01468">
    <property type="entry name" value="GA"/>
    <property type="match status" value="11"/>
</dbReference>
<dbReference type="Pfam" id="PF04650">
    <property type="entry name" value="YSIRK_signal"/>
    <property type="match status" value="1"/>
</dbReference>
<dbReference type="SMART" id="SM00844">
    <property type="entry name" value="GA"/>
    <property type="match status" value="53"/>
</dbReference>
<dbReference type="SUPFAM" id="SSF46997">
    <property type="entry name" value="Bacterial immunoglobulin/albumin-binding domains"/>
    <property type="match status" value="103"/>
</dbReference>
<organism>
    <name type="scientific">Staphylococcus aureus (strain JH1)</name>
    <dbReference type="NCBI Taxonomy" id="359787"/>
    <lineage>
        <taxon>Bacteria</taxon>
        <taxon>Bacillati</taxon>
        <taxon>Bacillota</taxon>
        <taxon>Bacilli</taxon>
        <taxon>Bacillales</taxon>
        <taxon>Staphylococcaceae</taxon>
        <taxon>Staphylococcus</taxon>
    </lineage>
</organism>
<proteinExistence type="inferred from homology"/>
<comment type="subcellular location">
    <subcellularLocation>
        <location evidence="3">Cell membrane</location>
        <topology evidence="3">Single-pass membrane protein</topology>
    </subcellularLocation>
</comment>
<gene>
    <name type="primary">ebh</name>
    <name type="ordered locus">SaurJH1_1524</name>
</gene>
<evidence type="ECO:0000255" key="1"/>
<evidence type="ECO:0000256" key="2">
    <source>
        <dbReference type="SAM" id="MobiDB-lite"/>
    </source>
</evidence>
<evidence type="ECO:0000305" key="3"/>
<feature type="signal peptide" evidence="1">
    <location>
        <begin position="1"/>
        <end position="39"/>
    </location>
</feature>
<feature type="chain" id="PRO_5000257021" description="Extracellular matrix-binding protein ebh">
    <location>
        <begin position="40"/>
        <end position="10624"/>
    </location>
</feature>
<feature type="transmembrane region" description="Helical" evidence="1">
    <location>
        <begin position="10430"/>
        <end position="10450"/>
    </location>
</feature>
<feature type="domain" description="FIVAR 1">
    <location>
        <begin position="2524"/>
        <end position="2580"/>
    </location>
</feature>
<feature type="domain" description="FIVAR 2">
    <location>
        <begin position="2610"/>
        <end position="2666"/>
    </location>
</feature>
<feature type="domain" description="FIVAR 3">
    <location>
        <begin position="2687"/>
        <end position="2750"/>
    </location>
</feature>
<feature type="domain" description="FIVAR 4">
    <location>
        <begin position="2780"/>
        <end position="2836"/>
    </location>
</feature>
<feature type="domain" description="FIVAR 5">
    <location>
        <begin position="2864"/>
        <end position="2919"/>
    </location>
</feature>
<feature type="domain" description="FIVAR 6">
    <location>
        <begin position="2947"/>
        <end position="3002"/>
    </location>
</feature>
<feature type="domain" description="FIVAR 7">
    <location>
        <begin position="3030"/>
        <end position="3085"/>
    </location>
</feature>
<feature type="domain" description="FIVAR 8">
    <location>
        <begin position="3154"/>
        <end position="3212"/>
    </location>
</feature>
<feature type="domain" description="FIVAR 9">
    <location>
        <begin position="3280"/>
        <end position="3339"/>
    </location>
</feature>
<feature type="domain" description="FIVAR 10">
    <location>
        <begin position="3407"/>
        <end position="3465"/>
    </location>
</feature>
<feature type="domain" description="FIVAR 11">
    <location>
        <begin position="3533"/>
        <end position="3591"/>
    </location>
</feature>
<feature type="domain" description="FIVAR 12">
    <location>
        <begin position="3659"/>
        <end position="3717"/>
    </location>
</feature>
<feature type="domain" description="FIVAR 13">
    <location>
        <begin position="3785"/>
        <end position="3843"/>
    </location>
</feature>
<feature type="domain" description="FIVAR 14">
    <location>
        <begin position="3911"/>
        <end position="3969"/>
    </location>
</feature>
<feature type="domain" description="FIVAR 15">
    <location>
        <begin position="4037"/>
        <end position="4095"/>
    </location>
</feature>
<feature type="domain" description="FIVAR 16">
    <location>
        <begin position="4163"/>
        <end position="4221"/>
    </location>
</feature>
<feature type="domain" description="FIVAR 17">
    <location>
        <begin position="4289"/>
        <end position="4347"/>
    </location>
</feature>
<feature type="domain" description="FIVAR 18">
    <location>
        <begin position="4415"/>
        <end position="4473"/>
    </location>
</feature>
<feature type="domain" description="FIVAR 19">
    <location>
        <begin position="4541"/>
        <end position="4599"/>
    </location>
</feature>
<feature type="domain" description="FIVAR 20">
    <location>
        <begin position="4667"/>
        <end position="4725"/>
    </location>
</feature>
<feature type="domain" description="FIVAR 21">
    <location>
        <begin position="4793"/>
        <end position="4851"/>
    </location>
</feature>
<feature type="domain" description="FIVAR 22">
    <location>
        <begin position="4919"/>
        <end position="4977"/>
    </location>
</feature>
<feature type="domain" description="FIVAR 23">
    <location>
        <begin position="5045"/>
        <end position="5103"/>
    </location>
</feature>
<feature type="domain" description="FIVAR 24">
    <location>
        <begin position="5171"/>
        <end position="5229"/>
    </location>
</feature>
<feature type="domain" description="FIVAR 25">
    <location>
        <begin position="5297"/>
        <end position="5355"/>
    </location>
</feature>
<feature type="domain" description="FIVAR 26">
    <location>
        <begin position="5423"/>
        <end position="5481"/>
    </location>
</feature>
<feature type="domain" description="FIVAR 27">
    <location>
        <begin position="5549"/>
        <end position="5607"/>
    </location>
</feature>
<feature type="domain" description="FIVAR 28">
    <location>
        <begin position="5675"/>
        <end position="5733"/>
    </location>
</feature>
<feature type="domain" description="FIVAR 29">
    <location>
        <begin position="5801"/>
        <end position="5859"/>
    </location>
</feature>
<feature type="domain" description="FIVAR 30">
    <location>
        <begin position="6053"/>
        <end position="6111"/>
    </location>
</feature>
<feature type="domain" description="FIVAR 31">
    <location>
        <begin position="6179"/>
        <end position="6236"/>
    </location>
</feature>
<feature type="domain" description="FIVAR 32">
    <location>
        <begin position="6304"/>
        <end position="6362"/>
    </location>
</feature>
<feature type="domain" description="FIVAR 33">
    <location>
        <begin position="6430"/>
        <end position="6488"/>
    </location>
</feature>
<feature type="domain" description="FIVAR 34">
    <location>
        <begin position="6556"/>
        <end position="6614"/>
    </location>
</feature>
<feature type="domain" description="FIVAR 35">
    <location>
        <begin position="6682"/>
        <end position="6740"/>
    </location>
</feature>
<feature type="domain" description="FIVAR 36">
    <location>
        <begin position="6808"/>
        <end position="6866"/>
    </location>
</feature>
<feature type="domain" description="FIVAR 37">
    <location>
        <begin position="6934"/>
        <end position="6992"/>
    </location>
</feature>
<feature type="domain" description="FIVAR 38">
    <location>
        <begin position="7060"/>
        <end position="7118"/>
    </location>
</feature>
<feature type="domain" description="FIVAR 39">
    <location>
        <begin position="7186"/>
        <end position="7244"/>
    </location>
</feature>
<feature type="domain" description="FIVAR 40">
    <location>
        <begin position="7312"/>
        <end position="7370"/>
    </location>
</feature>
<feature type="domain" description="FIVAR 41">
    <location>
        <begin position="7438"/>
        <end position="7496"/>
    </location>
</feature>
<feature type="domain" description="FIVAR 42">
    <location>
        <begin position="7564"/>
        <end position="7622"/>
    </location>
</feature>
<feature type="domain" description="FIVAR 43">
    <location>
        <begin position="7690"/>
        <end position="7748"/>
    </location>
</feature>
<feature type="domain" description="FIVAR 44">
    <location>
        <begin position="7816"/>
        <end position="7874"/>
    </location>
</feature>
<feature type="domain" description="FIVAR 45">
    <location>
        <begin position="7942"/>
        <end position="8000"/>
    </location>
</feature>
<feature type="domain" description="FIVAR 46">
    <location>
        <begin position="8068"/>
        <end position="8129"/>
    </location>
</feature>
<feature type="domain" description="FIVAR 47">
    <location>
        <begin position="8194"/>
        <end position="8252"/>
    </location>
</feature>
<feature type="domain" description="FIVAR 48">
    <location>
        <begin position="8320"/>
        <end position="8378"/>
    </location>
</feature>
<feature type="domain" description="FIVAR 49">
    <location>
        <begin position="8446"/>
        <end position="8503"/>
    </location>
</feature>
<feature type="domain" description="FIVAR 50">
    <location>
        <begin position="8571"/>
        <end position="8629"/>
    </location>
</feature>
<feature type="domain" description="FIVAR 51">
    <location>
        <begin position="8697"/>
        <end position="8755"/>
    </location>
</feature>
<feature type="domain" description="FIVAR 52">
    <location>
        <begin position="8823"/>
        <end position="8881"/>
    </location>
</feature>
<feature type="domain" description="FIVAR 53">
    <location>
        <begin position="8949"/>
        <end position="9007"/>
    </location>
</feature>
<feature type="domain" description="FIVAR 54">
    <location>
        <begin position="9075"/>
        <end position="9133"/>
    </location>
</feature>
<feature type="domain" description="FIVAR 55">
    <location>
        <begin position="9201"/>
        <end position="9255"/>
    </location>
</feature>
<feature type="domain" description="FIVAR 56">
    <location>
        <begin position="9323"/>
        <end position="9382"/>
    </location>
</feature>
<feature type="domain" description="FIVAR 57">
    <location>
        <begin position="9577"/>
        <end position="9633"/>
    </location>
</feature>
<feature type="region of interest" description="Disordered" evidence="2">
    <location>
        <begin position="41"/>
        <end position="152"/>
    </location>
</feature>
<feature type="region of interest" description="Disordered" evidence="2">
    <location>
        <begin position="250"/>
        <end position="277"/>
    </location>
</feature>
<feature type="region of interest" description="Disordered" evidence="2">
    <location>
        <begin position="1347"/>
        <end position="1372"/>
    </location>
</feature>
<feature type="region of interest" description="Disordered" evidence="2">
    <location>
        <begin position="2418"/>
        <end position="2438"/>
    </location>
</feature>
<feature type="region of interest" description="Disordered" evidence="2">
    <location>
        <begin position="10527"/>
        <end position="10624"/>
    </location>
</feature>
<feature type="compositionally biased region" description="Polar residues" evidence="2">
    <location>
        <begin position="41"/>
        <end position="59"/>
    </location>
</feature>
<feature type="compositionally biased region" description="Low complexity" evidence="2">
    <location>
        <begin position="65"/>
        <end position="78"/>
    </location>
</feature>
<feature type="compositionally biased region" description="Polar residues" evidence="2">
    <location>
        <begin position="79"/>
        <end position="117"/>
    </location>
</feature>
<feature type="compositionally biased region" description="Basic and acidic residues" evidence="2">
    <location>
        <begin position="130"/>
        <end position="140"/>
    </location>
</feature>
<feature type="compositionally biased region" description="Polar residues" evidence="2">
    <location>
        <begin position="141"/>
        <end position="151"/>
    </location>
</feature>
<feature type="compositionally biased region" description="Polar residues" evidence="2">
    <location>
        <begin position="250"/>
        <end position="266"/>
    </location>
</feature>
<feature type="compositionally biased region" description="Polar residues" evidence="2">
    <location>
        <begin position="1360"/>
        <end position="1372"/>
    </location>
</feature>
<feature type="compositionally biased region" description="Polar residues" evidence="2">
    <location>
        <begin position="2427"/>
        <end position="2438"/>
    </location>
</feature>
<feature type="compositionally biased region" description="Basic and acidic residues" evidence="2">
    <location>
        <begin position="10542"/>
        <end position="10552"/>
    </location>
</feature>
<feature type="compositionally biased region" description="Basic and acidic residues" evidence="2">
    <location>
        <begin position="10591"/>
        <end position="10601"/>
    </location>
</feature>
<feature type="compositionally biased region" description="Basic residues" evidence="2">
    <location>
        <begin position="10606"/>
        <end position="10624"/>
    </location>
</feature>
<protein>
    <recommendedName>
        <fullName>Extracellular matrix-binding protein ebh</fullName>
    </recommendedName>
    <alternativeName>
        <fullName>ECM-binding protein homolog</fullName>
    </alternativeName>
</protein>
<keyword id="KW-1003">Cell membrane</keyword>
<keyword id="KW-0472">Membrane</keyword>
<keyword id="KW-0677">Repeat</keyword>
<keyword id="KW-0732">Signal</keyword>
<keyword id="KW-0812">Transmembrane</keyword>
<keyword id="KW-1133">Transmembrane helix</keyword>
<name>EBH_STAA2</name>
<sequence>MNYRDKIQKFSIRKYTVGTFSTVIATLVFLGFNTSQAHAAETNQPASVVKQKQQSNNEQTENRESQVQNSQNSQNSQSLSATHENEQPNNSQANLVNQKVAQSSTTNDEQPASQNVNTKKDSATAATTQPDKEESKHKQNESQSANKNGNDNRAAHVENHEANVVTASDSSDNGNVQHDRNELQAFFDANYHDYRFIDRENADSGTFNYVKGIFDKINTLLGSNDPINNKDLQLAYKELEQAVALIRTMPQRQQTSRRSNRIQTRSVESRAAEPRSVSDYQNANSSYYVENANDGSGYPVGTYINASSKGAPYNLPTTPWNTLKASDSKEIALMTAKQTGDGYQWVIKFNKGHAPHQNMIFWFALPADQVPVGRTDFVTVNSDGTNVQWSHGAGAGANKPLQQMWEYGVNDPDRSHDFKIRNRSGQVIYSWPTVHVYSLEDLSRASDYFSEAGATPATKAFGRQNFEYINGQKPAESPGVPKVYTFIGQGDASYTISFKTQGPTVNKLYYAAGGRALEYNQLFMYSQLYVESTQDHQQRLNGLRQVVNRTYRIGTTKRVEVSQGNVQTKKVLESTNLNIDDFVDDPLSYVKTPSNKVLGFYPTNANTNAFRPGGVQELNEYQLSQLFTDQKLQEAARTRNPIRLMIGFDYPDGYGNSETLVPVNLTVLPEIQHNIKFFKNDDTQNIAEKPFSKQAGHPVFYVYAGNQGNASVNLGGSVTSIQPLRINLTSNENFTDKGWQITGIPRTLHIENSTNRTNNARERNIELVGNLLPGDYFGTIRFGRKEQLFEIRVKPHTPTITTTAEQLRGTALQKVPVNISGIPLDPSALVYLVAPTNQTTNGGSEADQIPSGYTILATGTPDGVHNTVTIRPQDYVVFIPPVGKQIRAVVYYNKVVASNMSNAVTILPDDIPPTINNPVGINAKYYRGDEVNFTMGVSDRHSGIKNTTITTLPSGWTSNLTKSDNKNGSLAITGRVSMNQAFNSDITFKVSATDNVNNTTNDSQSKHVSIHVGKISEDAHPIVLGNTEKVVVVNPTAVSNDEKQSIITAFMNKNQNIRGYLASTDPVTVDNNGNVTLHYRDGSSTTLDATNVMTYEPVVKSEYQTANAAKTATVTIAKGQSFNIGDIKQYFTLSNGQAIPNGTFTNITSDRTIPTAQEVSQMNAGTQLYHIVASNAYHKDTEDFYISLKIVDVKQPEGDQRVYRTSTYDLTTDEISKVKQAFINANRDVITLAEGDISVTNTPNGANVSTITVNINKGRLTKSFASNLANMNFLRWVNFPQDYTVTWTNAKIANRPTDGGLSWSDDHKSLIYRYDATLGTQITTNDILTMLKATTTVPGLRNNITGNEKAQAEAGGRPNYRTTGYSQSNATTDGQRQFTLNGQVIQILDIINPSNGYGGQPVTNSNTRANHSNSTVVNVNEPAANGAGAFTIDHVVKSNSTHNASDAVYKAQLYLTPYGPKQYVEHLNQNTGNTTDAINIYFVPSDLVNPTISVGNYTNHQVFSGETFTNTITANDNFGVQSVTVPNTSQITGTVDNNHQHVSATAPNVTSATSKTINLLATDTSGNTATTSFNVTVKPLRDKYRVGTSSTAANPVRIANISNNATVSQADQTTIINSLTFTSNAPNRNYATASANEITSKTVSNVSRTGNNANVTVTVTHQDGTTSTVTVPVKHVIPEIVAHSHYTVQGQDFPAGNGSSAADYFKLSNGSAIPDATITWVSGQAPNKDNTRIGEDITVTAHILIDGETTPITKTATYKVVRTVPKHVFETARGVLYPGVSDMYDAKQYVKPVNNSWSTNAQHMNFQFVGTYGPNKDVVGISTRLIRVTYDNRQTEDLTILSKVKPDPPRIDANSVTYKAGLTNQEIKVNNVLNNSSVKLFKADNTPLNVTNITHGSGFSSVVTVSDALPNGGIKAKSSISMNNVTYTTQDEHGQVVTVTRNESVDSNDSASVTVTPQLQATTEGAVFIKGGDGFDFGHVERFIQNPPHGATVAWHDSPDTWKNTVGNTHKTAVVTLPSGQGTRNVEVPVKVYPVANAKAPSRDVKGQNLTHGTNAIDYITFDPNTNTNGITAAWANRQQPNNQQAGVQHLNVDVTYPGISAAKRVPVTVNVYQFEFPQTTYTTTVGGTLASGTQASGYAHMQNASGLPTDGFTYKWNRDTTGTNDANWAAMNKPNTAQVVNAKYDVIYNGHTFATSLPAKFVVKDVQPAKPTVTETAAGAITIAPGANQTVNTHAGNVTTYADKLVIKRNGNVVTTFTRRNNTSPWVKEASADNVTGIVGTNNGITVAAGTFNPADTIQVVATQGSGETISDEQRSDDFTVVAPQPNQATTKIWQNGHIDITPNNPSGHLINPTQAMDIAYTEKVGNGAEHSKTINVVRGQNNQWTIANKPDYVTLDAQTGKVTFNANTIKPNSSITITPKAGTGHSVSSNPSTLTAPAAHTVNTTEIVKDYGSNVTAAEINNAVQVANKRTATIKNGTAMPTNLAGGSTTTIPVTVTYNDGSTEEVQESIFTKADKRELITAKNHLDDPVSTEGKKPGTITQYNNAMHNAQQQINTAKTEAQQVINNERATPQQVSDALTKVRAAQTKIDQAKALLQNKEDNSQLVTSKNNLQSSVNQVPSTAGMTQQSIDNYNAKKREAETEITAAQRVIDNGDATAQQISDEKHRVDNALTALNQAKHDLTADTHALEQAVQQLNRTGTTTGKKPASITAYNNSIRALQSDLTSAKNSANAIIQKPIRTVQEVQSALTNVNRVNERLTQAINQLVPLADNSALRTAKTKLDEEINKSVTTDGMTQSSIQAYENAKRAGQTETTNAQNVINNGDATDQQIAAEKTKVEEKYNSLKQAIAGLTPDLAPLQTAKTQLQNDIDQPTSTTGMTSASVAAFNDKLSAARTKIQEIDRVLASHPDVATIRQNVTAANAAKTALDQARNGLTVDKAPLENAKNQLQHSIDTQTSTTGMTQDSINAYNAKLTAARNKVQQINQVLAGSPTVDQINTNTSAANQAKSDLDHARQALTPDKAPLQNAKTQLEQSINQPTDTTGMTTASLNAYNQKLQAARQKLTEINQVLNGNPTVQNINDKVAEANQAKDQLNTARQGLTLDRQPALTTLHGASNLNQAQQNNFTQQINAAQNHAALETIKSNITALNTAMTKLKDSVADNNTIKSGQNYTDATPANKQAYDNAVNAAKGVIGETTNPTMDVNTVNQKAASVKSTKDALDGQQNLQRAKTEATNAITHASDLNQAQKNALTQQVNSAQNVQAVNDIKQTTQSLNTAMTGLKRGVANHNQVVQSDNYVNADTNKKNDYNNAYNHANDIINGNAQHPVITPSDVNNALSNVTSKEHALNGEAKLNAAKQEANTALGHLNNLNNVQRQNLQSQINGAHQIDAVNTIKQNATNLNSAMGNLRQAVADKDQVKRTEDYADADTAKQNAYNSAVSSAETIINQTANPTMSVDDVNRATSAVTTNKSALNGDEKLVQSKTDAARAIDALPHLNNAQKADVKSKINAASNIAGVNTVKQQGTDLNTAMGNLQGAINDEQTTLNSQNYQDATPSKKTAYTNAVQAAKDILNKSNGQNKTKDQVTEAMNQVNSAKNNLDGTRLLDQAKQTAKQQLNNMTHLTTAQKTNLTNQINSGTTVAGVHTVQSNANTLDQAMNTLRQSIANNDATKASEDYVDANNDKQTAYNNAVAAAETIINANSNPEMNPSTITQKAEQVNSSKTALNGDENLATAKQNAKTYLNTLTSITDAQKNNLISQISSATRVSGVDTVKQNAQHLDQAMANLQNGINNESQVKSSEKYRDADTNKQQEYDNAITAAKAILNKSTGPNTAQNAVEAALQRVNTAKDALNGDAKLIAAQNAAKQHLGTLTHITTAQRNDLTNQISQATNLAGVESVKQSANSLDGAMGNLQTAINDKSGTLASQNFLDADEQKRNAYNQAISAAETILNKQTGPNTAKTAVEQALNNVNSAKHALNGTQNLNNAKQAAITAINGASDLNQKQKDALKAQANGAQRVSNANDVQRNATELNTAMGQLQHAIADKTNTLASSKYVNADSTKQNAYTTKVTNAEHIISGTPTVVTTPSEVTAAANQVNSAKQELNGDERLRVAKQNANTAIDALTQLNTPQKAKLKEQVGQANRLEDVQSVQTNGQSLNNAMKGLRYSIANETTVKASQNYTDASPNNQSTYNSAVSNAKGIINQTNNPTMDTSAITQATTQVNNAKNGLNGAENLRNAQNTAKQNLNTLSHLTNNQKSAISSQIDRAGHVSEVTAAKNAATELNAQMGNLEQAIHDQNTVKQGVNFTDADKAKRDAYTNAVSRAETILNKTQGANTSKQDVEAAIQNVTSAKNALNGDQNVTNAKNAAKNALNNLTSINNAQKRDLTTKIDQATTVAGVEAVSNTGTQLNTAMANLQNGINDKANTLASENYHDADSDKKTAYTQAVTNAENILNKNSGSNLDKAAVENALSQVTNAKGALNGNHNLEQAKSNANTTINGLQHLTTAQKDKLKQQVQQAQNVAGVDTVKSSANTLNGAMGTLRNSIQDNTATKNGQNYLDATERNKTNYNNAVDSANGVINATSNPNMDANAINQIATQVTSTKNALDGTHNLTQAKQTATNAIDGATNLNKAQKDALKAQVTSAQRVANVTSIQQTANELNTAMGQLQHGIDDENATKQTQKYRDAEQSKKTAYDQAVAAAKAILNKQTGSNSDKAAVDRALQQVTSTKDALNGDAKLAEAKAAARQNLGTLNHITNAQRTALEGQINQATTVDGVNTVKTNANTLDGAMNSLQGAINDKDATLRNQNYLDADESKRNAYTQAVTAAEGILNKQTGGNTSKADVDNALNAVTRAKAALNGAENLRNAKTSATNTINGLPNLTQLQKDNLKHQVEQAQNVVGVNGVKDKGNTLNTAMGALRTSIQNDNTTKTSQNYLDASDSNKNNYNTAVNNANGVINATNNPNMDANAINDMANQVNTTKAALNGAQNLAQAKTNATNTINNAQDLNQKQKDALKTQVNNAQRVSDANNVQHTATELNGAMTALKAAIADKERTKASGNYVNADQEKRQAYDSKVTNAENIINGTPNATLTVNDVNSAASQVNAAKTALNGDNNLRVAKEHANNTIDGLAQLNNVQKAKLKEQVQSATTLDGVQTVKNSSQTLNTAMKGLRDSIANEATIKAGQNYTDASPNNRNEYDSAVTAAKAIINQTSNPTMEPNTITQATSQVTTKEHALNGAQNLAQAKTTAKNNLNNLTSINNAQKDALTRNIDGATTVAGVNQETAKATELNNAMHSLQNGINDETQTKQTQKYLDAEPSKKSAYDQAVNAAKAILTKASGQNVDKAAVEQALQNVNSTKTALNGDAKLNEAKAAAKQTLGTLTHINNAQRNALDNEITQATNVEGVNTVKAKAQQLDGAMGQLETSIRDKDTTLQSQNYQDADDAKRTAYSQAVNAAATILNKTAGGNTPKADVERAMQAVTQANTALNGIQNLERAKQAANTAITNASDLNTKQKEALKAQVTSAGRVSAANGVEHTATELNTAMTALKRAIADKADTKASGNYVNADANKRQAYDEKVTAAEHIVSGTPTPTLTPSDVTNAATQVTNAKTQLNGNHNLEVAKQNANTAIDGLTSLNGPQKAKLKEQVGQATTLPNVQTVRDNAQTLNTAMKGLRDSIANEATIKAGQNYTDASQNKQNDYNNAVTAAKAIIGQTTSPSMIAQEINQAKDQVTAKQQALNGQENLRTAQTNAKQHLNGLSDLTNAQKDAAKRQIEGATHVNEVTQAQNNADALNTAMTNLKNGIQDQNTIKQGVNFTDADEAKRNAYTNAVTQAEQILNKAQGPNTAKDGVETALQNVQRAKNELNGNQNVANAKTTAKNALNNLTSINNAQKAALKSQIEGATTVAGVNQVSTMASELNTAMSNLQRGINDEAATKAAQKYTEADRDKQTAYNDAVTAAKTLLDKTAGSNDNKVAVEQALQRVNTAKTALNGDARLNEAKNTAKQQLATMSHLTNAQKANLTEQIERGTTVAGVQGIQANAGTLNQAMNQLRQSIASKDATKSSEDYQDANADLQNAYNDAVTNAEGIISATNNPEMNPDTINQKASQVNSAKSALNGDEKLAAAKQTAKSDIGRLTDLNNAQRTAANAEVDQAPNLAAVTAAKNKATSLNTAMGNLKHALAEKDNTKRSVNYTDADQPKQQAYDTAVTQAEAITNANGSNANETQVQAALNQLNQAKNDLNGDNKVAQAKETAKRALASYSNLNNAQSTAATSQIDNATTVADVTAAQNTANELNTAMGQLQNGINDQNTVKQQVNFTDADQGKKDAYTNAVTNAQGILDKANGQNMTKAQVEAALNQVTTAKNALNGDANVRQAKSDAKANLGTLTHLNNAQKQDLTSQIEGATTVNGVNSVKTKAQDLDGAMQRLESAIANKDQTKASENYIDADPTKKTAFDNAITQAESYLNKDHGTNKDKQAVEQAIQSVTSTENALNGDANLQCAKTEATQAIDNLTQLNTPQKTALKQQVNAAQRVSGVTDLKNSATSLNNAMDQLKQAIGDHDTIVAGGNYTNASPDKQGAYTDAYNAAKNIVNGSPNVITNAADVTAATQRVNNAETSLNGDTNLATAKQQAKDALRQMTHLSDAQKQSITGQIDSATQVTGVQSVKDNATNLDNAMNQLRNSIANKDEVKASQPYVDADTDKQNAYNTAVTSAENIINATSQPTLDPSAVTQAANQVNTNKTALNGAQNLANKKQETTANINRLSHLNNAQKQDLNTQVTNAPNISTVNQVKTKAEQLDQAMERLINGIQDKDQVKQSVNFTDADPEKQTAYNNAVTAAENIINQANGTNANQSQVEAALSTVTTTKQALNGDRKVTDAKNNANQTLSTLDNLNNAQKGAVTGNINQAHTVAEVTQAIQTAQELNTAMGNLKNSLNDKDTTLGSQNFADADPEKKNAYNEAVRNAENILNKSTGTNVPKDQVEAAMNQVNTTKAALNGTQNLEKAKQHANTAIDGLSHLTNAQKEALKQLVQQSTTVAEAQGNEQKANNVDAAMDKLRQSIADNATTKQNQNYTDASPNKKDAYNNAVTTAQGIIDQTTNPSLDPTVINQAAGQVSTSKNALNGNENLEAAKQQATQSLGSLDNLNNAQKQAVTNQINGAHTVDEANQIKQNAQNLNTAMGNLKQAIADKDATKATVNFTDADQAKQQAYNTAVTNAENIISKANGGNATQTEVEQAIQQVNAAKQALNGNANVQHAKDEATALINNSNDLNQAQKDALKQQVQNATTVAGVNNVKQTAQELNNAMTQLKQGIADKEQTKADGNFVNADSDKQNAYNQAVAKAEALISGTPDVVVTPSEITAALNKVTQAKNDLNGNTNLATAKQNVQHAIDQLPNLNQAQRDEYSKQITQATLVPNVNAIQQAATTLNDAMTQLKQGIANKAQIKGSENYHDADTDKQTAYDNAVTKAEELLKQTTNPTMDPNTIQQALTKVNDTNQALNGNQKLADAKQDAKTTLGTLDHLNDAQKQALTTQVEQAPDIATVNNVKQNAQNLNNAMTNLNNALQDKTETLNSINFTDADQAKKDDYTNAVSHAEGILSKANGSNASQTEVEQAMQRVNEAKQALNGNDNVQRAKDAAKQVITNANDLNQAQKDALKQQVDAAQTVANVNTIKQTAQDLNQAMTQLKQGIADKDQTKANGNFVNADTDKQNAYNNAVAHAEQIISGTPNANVDPQQVAQALQQVNQAKGDLNGNHNLQVAKDNANTAIDQLPNLNQPQKTALKDQVSHAELVTGVNAIKQNADALNNAMGTLKQQIQANSQVPQSVDFTQADQDKQQAYNNAANQAQQIANGTPTPVLAPDTVTKAVTTMNQAKDALNGDEKLAQAKQDALANLDTLRDLNQPQRDALRNQINQAQALATVEQTKQNAQNVNTAMGNLKQGIANKDTVKASENYHDADVDKQTAYTNAVSQAEGIINQTTNPTLNPDDITRALTQVTDAKNSLNGEAKLATEKQNAKDAVSGMTHLNDAQKQALKGQIDQSPEIATVNQVKQTATSLDQAMDQLSQAINDKDQILADGNYLNADPDKQNAYKQAVAKAEALLNKQSGTNEVQAQVESITNEVNAAKQALNGNDNLANAKQQAKQQLANLTHLNDAQKQSFESQITQAPLVTDVTTINQKAQTLDHAMELLRNSVADNQTTLASEDYHDATAQRQNDYNKAVTAANNIINQTTSPTMNPDDVNGATTQVNNTKVALDGDENLAAAKQQANNRLDQLDHLNNAQKQQLQSQITQSSDIAAVNGHKQTAESLNTAMGNLINAIADHQAVEQRGNFINADTDKQTAYNTAVNEAAAMINKQTGQNANQTEVEQAITKVQTTLQALNGDHNLQVAKTNATQAIDALTSLNDPQKTALKDQVTAATLVTAVHQIEQNANTLNQAMHGLRQSIQDNAATKANSKYINEDQPEQQNYDQAVQAANNIINEQTATLDNNAINQVAATVNTTKAALHGDVKLQNDKDHAKQTVSQLAHLNNAQKHMEDTLIDSETTRTAVKQDLTEVQALDQLMDALQQSIADKDATRASSAYVNAEPNKKQAYDEAVQNAESIIAGLNNPTINKGNVSSATQAVISSKNALDGVERLAQDKQTAGNSLNHLDQLTPAQQQALENQINNATTRDKVAEIIAQAQALNEAMKALKESIKDQPQTEASSKFINEDQAQKDAYTQAVQHAKDLINKTTDPTLAKSIIDQATQAVTDAKNNLHGDQKLAQDKQRATETLNNLSNLNTPQRQALENQINNAATRGEVAQKLTEAQALNQAMEALRNSIQDQQQTESGSKFINEDKPQKDAYQAAVQNAKDLINQTGNPTLDKAQVEQLTHAFKQAKDNLHGDQKLADDKQHAVTDLNQLNGLNNPQRQALESQINNAATRGEVAQKLAEAKALDQAMQALRNSIQDQQQTEAGSKFINEDKPQKDAYQAAVQNAKDLINQTGNPTLDKSQVEQLTQAVTTAKDNLHGDQKLARDQQQAVTTVNALPNLNHAQQQTLTDAINAAPTRTEVAQHVQTATELDHAMETLKNKVDQVNTDKAQPNYTEASTDKKEAVDQALQAAQSITDPTNGSNANKDAVEQALTKLQEKVNELNGNERVAEAKTQAKQTIDQLTHLNADQIATAKQNIDQATKLQPIAELVDQATQLNQSMDQLQQAVNEHANVEQTIDYTQADSDKQKAYKQAIADAENVLKQNANKQQVDQALQNILNAKQALNGDERVALAKTNGKHDIDQLNALNNAQQDGFKGRIDQSNDLNQIQQIVDEAKALNRAMDQLSQEITGNEGRTKGSTNYVNADTQVKQVYDEAVDKAKQALDKSSGQNLTAEQVIKLNDAVTAAKKALNGEERLNNRKAEALQRLDQLTHLNNAQRQLAIQQINNAETLNKASRAINRATKLDNAMGAVQQYIDEQHLGVISSTNYINADDNLKANYDNAIANAAHELDKVQGNAIAKAEAEQLKQNIIDAQNALNGDQNLANAKDKANAFVNSLNGLNQQQQDLAHKAINNADTVSDVTDIVNNQIDLNDAMETLKHLVDNEIPNAEQTVNYQNADDNAKTNFDDAKRLANTLLNSDNTNVNDINGAIQAVNDAIHNLNGDQRLQDAKDKAIQSINQALANKLKEIEASNATDQDKLIAKNKAEELANSIINNINKATSNQAVSQVQTAGNHAIEQVHANEIPKAKIDANKDVDKQVQALIDEIDRNPNLTDKEKQALKDRINQILQQGHNDINNALTKEEIEQAKAQLAQALQDIKDLVKAKEDAKQDVDKQVQALIDEIDQNPNLTDKEKQALKDRINQILQQGHNGINNAMTKEEIEQAKAQLAQALKEIKDLVKAKENAKQDVDKQVQALIDEIDQNPNLTDKEKQALKDRINQILQQGHNDINNAMTKEEIEQAKAQLAQALQDIKDLVKAKEDAKNAIKALANAKRDQINSNPDLTPEQKAKALKEIDEAEKRALQNVENAQTIDQLNRGLNLGLDDIRNTHVWEVDEQPAVNEIFEATPEQILVNGELIVHRDDIITEQDILAHINLIDQLSAEVIDTPSTATISDSLTAKVEVTLLDGSKVIVNVPVKVVEKELSVVKQQAIESIENAAQQKIDEINNSVTLTLEQKEAAIAEVNKLKQQAIDHVNNAPDVHSVEEIQQQEQAYIEQFNPEQFTIEQAKSNAIKSIEDAIQHMIDEIKARTDLTDKEKQEAIAKLNQLKEQAIQAIQRAQSISEITEQLEQFKAQMKAANPTAKELAKRKQEAISRIKDFSNEKINSIRNSEIGTADEKQAAMNQINEIVLETIRDINNAHTLQQVEAALNNGIARISAVQIVISDRAKQSSSTGNESNSHLTIGYGTANHPFNSSTIGHKKKLDEDDDIDPLHMRHFSNNFGNVIKNAIGVVGISGLLASFWFFIAKRRRKEDEEEELEIRDNNKDSIKETLDDTKHLPLLFAKRRRKEDEEDVTVEEKDSLNNGESLDKVKHTPFFLPKRRRKEDEEDVEVTNENTDEKVLKDNEHSPLLFAKRRKDKEEDVETTTSIESKDEDVPLLLAKKKNQKDNQSKDKKSASKNTSKKVAAKKKKKKSKKNKK</sequence>
<reference key="1">
    <citation type="submission" date="2007-06" db="EMBL/GenBank/DDBJ databases">
        <title>Complete sequence of chromosome of Staphylococcus aureus subsp. aureus JH1.</title>
        <authorList>
            <consortium name="US DOE Joint Genome Institute"/>
            <person name="Copeland A."/>
            <person name="Lucas S."/>
            <person name="Lapidus A."/>
            <person name="Barry K."/>
            <person name="Detter J.C."/>
            <person name="Glavina del Rio T."/>
            <person name="Hammon N."/>
            <person name="Israni S."/>
            <person name="Dalin E."/>
            <person name="Tice H."/>
            <person name="Pitluck S."/>
            <person name="Chain P."/>
            <person name="Malfatti S."/>
            <person name="Shin M."/>
            <person name="Vergez L."/>
            <person name="Schmutz J."/>
            <person name="Larimer F."/>
            <person name="Land M."/>
            <person name="Hauser L."/>
            <person name="Kyrpides N."/>
            <person name="Ivanova N."/>
            <person name="Tomasz A."/>
            <person name="Richardson P."/>
        </authorList>
    </citation>
    <scope>NUCLEOTIDE SEQUENCE [LARGE SCALE GENOMIC DNA]</scope>
    <source>
        <strain>JH1</strain>
    </source>
</reference>